<gene>
    <name evidence="1" type="primary">apt</name>
    <name type="ordered locus">BcerKBAB4_4255</name>
</gene>
<proteinExistence type="inferred from homology"/>
<dbReference type="EC" id="2.4.2.7" evidence="1"/>
<dbReference type="EMBL" id="CP000903">
    <property type="protein sequence ID" value="ABY45414.1"/>
    <property type="molecule type" value="Genomic_DNA"/>
</dbReference>
<dbReference type="RefSeq" id="WP_002015305.1">
    <property type="nucleotide sequence ID" value="NC_010184.1"/>
</dbReference>
<dbReference type="SMR" id="A9VIN4"/>
<dbReference type="KEGG" id="bwe:BcerKBAB4_4255"/>
<dbReference type="eggNOG" id="COG0503">
    <property type="taxonomic scope" value="Bacteria"/>
</dbReference>
<dbReference type="HOGENOM" id="CLU_063339_3_0_9"/>
<dbReference type="UniPathway" id="UPA00588">
    <property type="reaction ID" value="UER00646"/>
</dbReference>
<dbReference type="Proteomes" id="UP000002154">
    <property type="component" value="Chromosome"/>
</dbReference>
<dbReference type="GO" id="GO:0005737">
    <property type="term" value="C:cytoplasm"/>
    <property type="evidence" value="ECO:0007669"/>
    <property type="project" value="UniProtKB-SubCell"/>
</dbReference>
<dbReference type="GO" id="GO:0002055">
    <property type="term" value="F:adenine binding"/>
    <property type="evidence" value="ECO:0007669"/>
    <property type="project" value="TreeGrafter"/>
</dbReference>
<dbReference type="GO" id="GO:0003999">
    <property type="term" value="F:adenine phosphoribosyltransferase activity"/>
    <property type="evidence" value="ECO:0007669"/>
    <property type="project" value="UniProtKB-UniRule"/>
</dbReference>
<dbReference type="GO" id="GO:0016208">
    <property type="term" value="F:AMP binding"/>
    <property type="evidence" value="ECO:0007669"/>
    <property type="project" value="TreeGrafter"/>
</dbReference>
<dbReference type="GO" id="GO:0006168">
    <property type="term" value="P:adenine salvage"/>
    <property type="evidence" value="ECO:0007669"/>
    <property type="project" value="InterPro"/>
</dbReference>
<dbReference type="GO" id="GO:0044209">
    <property type="term" value="P:AMP salvage"/>
    <property type="evidence" value="ECO:0007669"/>
    <property type="project" value="UniProtKB-UniRule"/>
</dbReference>
<dbReference type="GO" id="GO:0006166">
    <property type="term" value="P:purine ribonucleoside salvage"/>
    <property type="evidence" value="ECO:0007669"/>
    <property type="project" value="UniProtKB-KW"/>
</dbReference>
<dbReference type="CDD" id="cd06223">
    <property type="entry name" value="PRTases_typeI"/>
    <property type="match status" value="1"/>
</dbReference>
<dbReference type="FunFam" id="3.40.50.2020:FF:000004">
    <property type="entry name" value="Adenine phosphoribosyltransferase"/>
    <property type="match status" value="1"/>
</dbReference>
<dbReference type="Gene3D" id="3.40.50.2020">
    <property type="match status" value="1"/>
</dbReference>
<dbReference type="HAMAP" id="MF_00004">
    <property type="entry name" value="Aden_phosphoribosyltr"/>
    <property type="match status" value="1"/>
</dbReference>
<dbReference type="InterPro" id="IPR005764">
    <property type="entry name" value="Ade_phspho_trans"/>
</dbReference>
<dbReference type="InterPro" id="IPR000836">
    <property type="entry name" value="PRibTrfase_dom"/>
</dbReference>
<dbReference type="InterPro" id="IPR029057">
    <property type="entry name" value="PRTase-like"/>
</dbReference>
<dbReference type="InterPro" id="IPR050054">
    <property type="entry name" value="UPRTase/APRTase"/>
</dbReference>
<dbReference type="NCBIfam" id="TIGR01090">
    <property type="entry name" value="apt"/>
    <property type="match status" value="1"/>
</dbReference>
<dbReference type="NCBIfam" id="NF002633">
    <property type="entry name" value="PRK02304.1-2"/>
    <property type="match status" value="1"/>
</dbReference>
<dbReference type="NCBIfam" id="NF002634">
    <property type="entry name" value="PRK02304.1-3"/>
    <property type="match status" value="1"/>
</dbReference>
<dbReference type="NCBIfam" id="NF002636">
    <property type="entry name" value="PRK02304.1-5"/>
    <property type="match status" value="1"/>
</dbReference>
<dbReference type="PANTHER" id="PTHR32315">
    <property type="entry name" value="ADENINE PHOSPHORIBOSYLTRANSFERASE"/>
    <property type="match status" value="1"/>
</dbReference>
<dbReference type="PANTHER" id="PTHR32315:SF3">
    <property type="entry name" value="ADENINE PHOSPHORIBOSYLTRANSFERASE"/>
    <property type="match status" value="1"/>
</dbReference>
<dbReference type="Pfam" id="PF00156">
    <property type="entry name" value="Pribosyltran"/>
    <property type="match status" value="1"/>
</dbReference>
<dbReference type="SUPFAM" id="SSF53271">
    <property type="entry name" value="PRTase-like"/>
    <property type="match status" value="1"/>
</dbReference>
<feature type="chain" id="PRO_1000088953" description="Adenine phosphoribosyltransferase">
    <location>
        <begin position="1"/>
        <end position="170"/>
    </location>
</feature>
<comment type="function">
    <text evidence="1">Catalyzes a salvage reaction resulting in the formation of AMP, that is energically less costly than de novo synthesis.</text>
</comment>
<comment type="catalytic activity">
    <reaction evidence="1">
        <text>AMP + diphosphate = 5-phospho-alpha-D-ribose 1-diphosphate + adenine</text>
        <dbReference type="Rhea" id="RHEA:16609"/>
        <dbReference type="ChEBI" id="CHEBI:16708"/>
        <dbReference type="ChEBI" id="CHEBI:33019"/>
        <dbReference type="ChEBI" id="CHEBI:58017"/>
        <dbReference type="ChEBI" id="CHEBI:456215"/>
        <dbReference type="EC" id="2.4.2.7"/>
    </reaction>
</comment>
<comment type="pathway">
    <text evidence="1">Purine metabolism; AMP biosynthesis via salvage pathway; AMP from adenine: step 1/1.</text>
</comment>
<comment type="subunit">
    <text evidence="1">Homodimer.</text>
</comment>
<comment type="subcellular location">
    <subcellularLocation>
        <location evidence="1">Cytoplasm</location>
    </subcellularLocation>
</comment>
<comment type="similarity">
    <text evidence="1">Belongs to the purine/pyrimidine phosphoribosyltransferase family.</text>
</comment>
<sequence length="170" mass="18588">MDFKQHIAIVPDYPKEGIVFKDITPLMNDGKAYKAATDAIVEYANKRDIDVVVGPEARGFIIGCPVSYALEVGFAPVRKLGKLPREVITVDYGKEYGTDVLTIHKDAIKPGQRVLITDDLLATGGTIEATIKLVEELGGVVAGIAFLVELTYLDGRKMLDGYDVLVLEKY</sequence>
<organism>
    <name type="scientific">Bacillus mycoides (strain KBAB4)</name>
    <name type="common">Bacillus weihenstephanensis</name>
    <dbReference type="NCBI Taxonomy" id="315730"/>
    <lineage>
        <taxon>Bacteria</taxon>
        <taxon>Bacillati</taxon>
        <taxon>Bacillota</taxon>
        <taxon>Bacilli</taxon>
        <taxon>Bacillales</taxon>
        <taxon>Bacillaceae</taxon>
        <taxon>Bacillus</taxon>
        <taxon>Bacillus cereus group</taxon>
    </lineage>
</organism>
<reference key="1">
    <citation type="journal article" date="2008" name="Chem. Biol. Interact.">
        <title>Extending the Bacillus cereus group genomics to putative food-borne pathogens of different toxicity.</title>
        <authorList>
            <person name="Lapidus A."/>
            <person name="Goltsman E."/>
            <person name="Auger S."/>
            <person name="Galleron N."/>
            <person name="Segurens B."/>
            <person name="Dossat C."/>
            <person name="Land M.L."/>
            <person name="Broussolle V."/>
            <person name="Brillard J."/>
            <person name="Guinebretiere M.-H."/>
            <person name="Sanchis V."/>
            <person name="Nguen-the C."/>
            <person name="Lereclus D."/>
            <person name="Richardson P."/>
            <person name="Wincker P."/>
            <person name="Weissenbach J."/>
            <person name="Ehrlich S.D."/>
            <person name="Sorokin A."/>
        </authorList>
    </citation>
    <scope>NUCLEOTIDE SEQUENCE [LARGE SCALE GENOMIC DNA]</scope>
    <source>
        <strain>KBAB4</strain>
    </source>
</reference>
<accession>A9VIN4</accession>
<keyword id="KW-0963">Cytoplasm</keyword>
<keyword id="KW-0328">Glycosyltransferase</keyword>
<keyword id="KW-0660">Purine salvage</keyword>
<keyword id="KW-0808">Transferase</keyword>
<name>APT_BACMK</name>
<protein>
    <recommendedName>
        <fullName evidence="1">Adenine phosphoribosyltransferase</fullName>
        <shortName evidence="1">APRT</shortName>
        <ecNumber evidence="1">2.4.2.7</ecNumber>
    </recommendedName>
</protein>
<evidence type="ECO:0000255" key="1">
    <source>
        <dbReference type="HAMAP-Rule" id="MF_00004"/>
    </source>
</evidence>